<feature type="chain" id="PRO_0000139605" description="Hypoxanthine-guanine phosphoribosyltransferase">
    <location>
        <begin position="1"/>
        <end position="175"/>
    </location>
</feature>
<feature type="active site" description="Proton acceptor" evidence="1">
    <location>
        <position position="100"/>
    </location>
</feature>
<feature type="binding site" evidence="2">
    <location>
        <position position="40"/>
    </location>
    <ligand>
        <name>diphosphate</name>
        <dbReference type="ChEBI" id="CHEBI:33019"/>
    </ligand>
</feature>
<feature type="binding site" evidence="2">
    <location>
        <position position="41"/>
    </location>
    <ligand>
        <name>diphosphate</name>
        <dbReference type="ChEBI" id="CHEBI:33019"/>
    </ligand>
</feature>
<feature type="binding site" evidence="2">
    <location>
        <position position="96"/>
    </location>
    <ligand>
        <name>Mg(2+)</name>
        <dbReference type="ChEBI" id="CHEBI:18420"/>
    </ligand>
</feature>
<feature type="binding site" evidence="2">
    <location>
        <position position="97"/>
    </location>
    <ligand>
        <name>Mg(2+)</name>
        <dbReference type="ChEBI" id="CHEBI:18420"/>
    </ligand>
</feature>
<feature type="binding site" evidence="2">
    <location>
        <position position="128"/>
    </location>
    <ligand>
        <name>GMP</name>
        <dbReference type="ChEBI" id="CHEBI:58115"/>
    </ligand>
</feature>
<feature type="binding site" evidence="2">
    <location>
        <begin position="149"/>
        <end position="150"/>
    </location>
    <ligand>
        <name>GMP</name>
        <dbReference type="ChEBI" id="CHEBI:58115"/>
    </ligand>
</feature>
<feature type="binding site" evidence="2">
    <location>
        <position position="156"/>
    </location>
    <ligand>
        <name>GMP</name>
        <dbReference type="ChEBI" id="CHEBI:58115"/>
    </ligand>
</feature>
<feature type="binding site" evidence="2">
    <location>
        <position position="162"/>
    </location>
    <ligand>
        <name>diphosphate</name>
        <dbReference type="ChEBI" id="CHEBI:33019"/>
    </ligand>
</feature>
<accession>P47696</accession>
<keyword id="KW-0963">Cytoplasm</keyword>
<keyword id="KW-0328">Glycosyltransferase</keyword>
<keyword id="KW-0460">Magnesium</keyword>
<keyword id="KW-0479">Metal-binding</keyword>
<keyword id="KW-0547">Nucleotide-binding</keyword>
<keyword id="KW-0660">Purine salvage</keyword>
<keyword id="KW-1185">Reference proteome</keyword>
<keyword id="KW-0808">Transferase</keyword>
<gene>
    <name type="primary">hpt</name>
    <name type="ordered locus">MG458</name>
</gene>
<reference key="1">
    <citation type="journal article" date="1995" name="Science">
        <title>The minimal gene complement of Mycoplasma genitalium.</title>
        <authorList>
            <person name="Fraser C.M."/>
            <person name="Gocayne J.D."/>
            <person name="White O."/>
            <person name="Adams M.D."/>
            <person name="Clayton R.A."/>
            <person name="Fleischmann R.D."/>
            <person name="Bult C.J."/>
            <person name="Kerlavage A.R."/>
            <person name="Sutton G.G."/>
            <person name="Kelley J.M."/>
            <person name="Fritchman J.L."/>
            <person name="Weidman J.F."/>
            <person name="Small K.V."/>
            <person name="Sandusky M."/>
            <person name="Fuhrmann J.L."/>
            <person name="Nguyen D.T."/>
            <person name="Utterback T.R."/>
            <person name="Saudek D.M."/>
            <person name="Phillips C.A."/>
            <person name="Merrick J.M."/>
            <person name="Tomb J.-F."/>
            <person name="Dougherty B.A."/>
            <person name="Bott K.F."/>
            <person name="Hu P.-C."/>
            <person name="Lucier T.S."/>
            <person name="Peterson S.N."/>
            <person name="Smith H.O."/>
            <person name="Hutchison C.A. III"/>
            <person name="Venter J.C."/>
        </authorList>
    </citation>
    <scope>NUCLEOTIDE SEQUENCE [LARGE SCALE GENOMIC DNA]</scope>
    <source>
        <strain>ATCC 33530 / DSM 19775 / NCTC 10195 / G37</strain>
    </source>
</reference>
<reference key="2">
    <citation type="journal article" date="1993" name="J. Bacteriol.">
        <title>A survey of the Mycoplasma genitalium genome by using random sequencing.</title>
        <authorList>
            <person name="Peterson S.N."/>
            <person name="Hu P.-C."/>
            <person name="Bott K.F."/>
            <person name="Hutchison C.A. III"/>
        </authorList>
    </citation>
    <scope>NUCLEOTIDE SEQUENCE [GENOMIC DNA] OF 9-98</scope>
    <source>
        <strain>ATCC 33530 / DSM 19775 / NCTC 10195 / G37</strain>
    </source>
</reference>
<sequence>MGIKSIVINEQQIEEGCQKAVNWCNAKFNNKKVIVLGILKGCIPFLGKVISKFSFDLQLDFMAVASYHGSHVQKQPPKIVLDMSHDPKDKDILLIEDIVDSGRSIKLVIDLLKTRHAKSITLISLIEKIKPKAFDINIDFSCFKVKDNFLVGFGLDYDGFYRNLPYVGVFEPDNP</sequence>
<evidence type="ECO:0000250" key="1">
    <source>
        <dbReference type="UniProtKB" id="P0A9M2"/>
    </source>
</evidence>
<evidence type="ECO:0000250" key="2">
    <source>
        <dbReference type="UniProtKB" id="P9WHQ9"/>
    </source>
</evidence>
<evidence type="ECO:0000305" key="3"/>
<protein>
    <recommendedName>
        <fullName>Hypoxanthine-guanine phosphoribosyltransferase</fullName>
        <shortName>HGPRT</shortName>
        <shortName>HGPRTase</shortName>
        <ecNumber evidence="2">2.4.2.8</ecNumber>
    </recommendedName>
</protein>
<dbReference type="EC" id="2.4.2.8" evidence="2"/>
<dbReference type="EMBL" id="L43967">
    <property type="protein sequence ID" value="AAC72478.1"/>
    <property type="molecule type" value="Genomic_DNA"/>
</dbReference>
<dbReference type="EMBL" id="U02193">
    <property type="protein sequence ID" value="AAD12479.1"/>
    <property type="molecule type" value="Genomic_DNA"/>
</dbReference>
<dbReference type="PIR" id="F64250">
    <property type="entry name" value="F64250"/>
</dbReference>
<dbReference type="RefSeq" id="WP_009885573.1">
    <property type="nucleotide sequence ID" value="NC_000908.2"/>
</dbReference>
<dbReference type="SMR" id="P47696"/>
<dbReference type="FunCoup" id="P47696">
    <property type="interactions" value="141"/>
</dbReference>
<dbReference type="STRING" id="243273.MG_458"/>
<dbReference type="GeneID" id="88282639"/>
<dbReference type="KEGG" id="mge:MG_458"/>
<dbReference type="eggNOG" id="COG0634">
    <property type="taxonomic scope" value="Bacteria"/>
</dbReference>
<dbReference type="HOGENOM" id="CLU_073615_0_1_14"/>
<dbReference type="InParanoid" id="P47696"/>
<dbReference type="OrthoDB" id="9802824at2"/>
<dbReference type="BioCyc" id="MGEN243273:G1GJ2-552-MONOMER"/>
<dbReference type="UniPathway" id="UPA00591">
    <property type="reaction ID" value="UER00648"/>
</dbReference>
<dbReference type="UniPathway" id="UPA00909">
    <property type="reaction ID" value="UER00887"/>
</dbReference>
<dbReference type="Proteomes" id="UP000000807">
    <property type="component" value="Chromosome"/>
</dbReference>
<dbReference type="GO" id="GO:0005829">
    <property type="term" value="C:cytosol"/>
    <property type="evidence" value="ECO:0000318"/>
    <property type="project" value="GO_Central"/>
</dbReference>
<dbReference type="GO" id="GO:0052657">
    <property type="term" value="F:guanine phosphoribosyltransferase activity"/>
    <property type="evidence" value="ECO:0007669"/>
    <property type="project" value="RHEA"/>
</dbReference>
<dbReference type="GO" id="GO:0004422">
    <property type="term" value="F:hypoxanthine phosphoribosyltransferase activity"/>
    <property type="evidence" value="ECO:0000318"/>
    <property type="project" value="GO_Central"/>
</dbReference>
<dbReference type="GO" id="GO:0000287">
    <property type="term" value="F:magnesium ion binding"/>
    <property type="evidence" value="ECO:0000318"/>
    <property type="project" value="GO_Central"/>
</dbReference>
<dbReference type="GO" id="GO:0000166">
    <property type="term" value="F:nucleotide binding"/>
    <property type="evidence" value="ECO:0007669"/>
    <property type="project" value="UniProtKB-KW"/>
</dbReference>
<dbReference type="GO" id="GO:0032263">
    <property type="term" value="P:GMP salvage"/>
    <property type="evidence" value="ECO:0000318"/>
    <property type="project" value="GO_Central"/>
</dbReference>
<dbReference type="GO" id="GO:0006178">
    <property type="term" value="P:guanine salvage"/>
    <property type="evidence" value="ECO:0000318"/>
    <property type="project" value="GO_Central"/>
</dbReference>
<dbReference type="GO" id="GO:0046100">
    <property type="term" value="P:hypoxanthine metabolic process"/>
    <property type="evidence" value="ECO:0000318"/>
    <property type="project" value="GO_Central"/>
</dbReference>
<dbReference type="GO" id="GO:0032264">
    <property type="term" value="P:IMP salvage"/>
    <property type="evidence" value="ECO:0000318"/>
    <property type="project" value="GO_Central"/>
</dbReference>
<dbReference type="GO" id="GO:0006166">
    <property type="term" value="P:purine ribonucleoside salvage"/>
    <property type="evidence" value="ECO:0007669"/>
    <property type="project" value="UniProtKB-KW"/>
</dbReference>
<dbReference type="CDD" id="cd06223">
    <property type="entry name" value="PRTases_typeI"/>
    <property type="match status" value="1"/>
</dbReference>
<dbReference type="Gene3D" id="3.40.50.2020">
    <property type="match status" value="1"/>
</dbReference>
<dbReference type="InterPro" id="IPR050408">
    <property type="entry name" value="HGPRT"/>
</dbReference>
<dbReference type="InterPro" id="IPR005904">
    <property type="entry name" value="Hxn_phspho_trans"/>
</dbReference>
<dbReference type="InterPro" id="IPR000836">
    <property type="entry name" value="PRibTrfase_dom"/>
</dbReference>
<dbReference type="InterPro" id="IPR029057">
    <property type="entry name" value="PRTase-like"/>
</dbReference>
<dbReference type="NCBIfam" id="TIGR01203">
    <property type="entry name" value="HGPRTase"/>
    <property type="match status" value="1"/>
</dbReference>
<dbReference type="PANTHER" id="PTHR43340:SF1">
    <property type="entry name" value="HYPOXANTHINE PHOSPHORIBOSYLTRANSFERASE"/>
    <property type="match status" value="1"/>
</dbReference>
<dbReference type="PANTHER" id="PTHR43340">
    <property type="entry name" value="HYPOXANTHINE-GUANINE PHOSPHORIBOSYLTRANSFERASE"/>
    <property type="match status" value="1"/>
</dbReference>
<dbReference type="Pfam" id="PF00156">
    <property type="entry name" value="Pribosyltran"/>
    <property type="match status" value="1"/>
</dbReference>
<dbReference type="SUPFAM" id="SSF53271">
    <property type="entry name" value="PRTase-like"/>
    <property type="match status" value="1"/>
</dbReference>
<dbReference type="PROSITE" id="PS00103">
    <property type="entry name" value="PUR_PYR_PR_TRANSFER"/>
    <property type="match status" value="1"/>
</dbReference>
<name>HGPRT_MYCGE</name>
<proteinExistence type="inferred from homology"/>
<organism>
    <name type="scientific">Mycoplasma genitalium (strain ATCC 33530 / DSM 19775 / NCTC 10195 / G37)</name>
    <name type="common">Mycoplasmoides genitalium</name>
    <dbReference type="NCBI Taxonomy" id="243273"/>
    <lineage>
        <taxon>Bacteria</taxon>
        <taxon>Bacillati</taxon>
        <taxon>Mycoplasmatota</taxon>
        <taxon>Mycoplasmoidales</taxon>
        <taxon>Mycoplasmoidaceae</taxon>
        <taxon>Mycoplasmoides</taxon>
    </lineage>
</organism>
<comment type="function">
    <text evidence="2">Purine salvage pathway enzyme that catalyzes the transfer of the ribosyl-5-phosphate group from 5-phospho-alpha-D-ribose 1-diphosphate (PRPP) to the N9 position of the 6-oxopurines hypoxanthine and guanine to form the corresponding ribonucleotides IMP (inosine 5'-monophosphate) and GMP (guanosine 5'-monophosphate), with the release of PPi.</text>
</comment>
<comment type="catalytic activity">
    <reaction evidence="2">
        <text>IMP + diphosphate = hypoxanthine + 5-phospho-alpha-D-ribose 1-diphosphate</text>
        <dbReference type="Rhea" id="RHEA:17973"/>
        <dbReference type="ChEBI" id="CHEBI:17368"/>
        <dbReference type="ChEBI" id="CHEBI:33019"/>
        <dbReference type="ChEBI" id="CHEBI:58017"/>
        <dbReference type="ChEBI" id="CHEBI:58053"/>
        <dbReference type="EC" id="2.4.2.8"/>
    </reaction>
    <physiologicalReaction direction="right-to-left" evidence="2">
        <dbReference type="Rhea" id="RHEA:17975"/>
    </physiologicalReaction>
</comment>
<comment type="catalytic activity">
    <reaction evidence="2">
        <text>GMP + diphosphate = guanine + 5-phospho-alpha-D-ribose 1-diphosphate</text>
        <dbReference type="Rhea" id="RHEA:25424"/>
        <dbReference type="ChEBI" id="CHEBI:16235"/>
        <dbReference type="ChEBI" id="CHEBI:33019"/>
        <dbReference type="ChEBI" id="CHEBI:58017"/>
        <dbReference type="ChEBI" id="CHEBI:58115"/>
        <dbReference type="EC" id="2.4.2.8"/>
    </reaction>
    <physiologicalReaction direction="right-to-left" evidence="2">
        <dbReference type="Rhea" id="RHEA:25426"/>
    </physiologicalReaction>
</comment>
<comment type="cofactor">
    <cofactor evidence="2">
        <name>Mg(2+)</name>
        <dbReference type="ChEBI" id="CHEBI:18420"/>
    </cofactor>
</comment>
<comment type="pathway">
    <text evidence="2">Purine metabolism; IMP biosynthesis via salvage pathway; IMP from hypoxanthine: step 1/1.</text>
</comment>
<comment type="pathway">
    <text evidence="2">Purine metabolism; GMP biosynthesis via salvage pathway; GMP from guanine: step 1/1.</text>
</comment>
<comment type="subcellular location">
    <subcellularLocation>
        <location>Cytoplasm</location>
    </subcellularLocation>
</comment>
<comment type="similarity">
    <text evidence="3">Belongs to the purine/pyrimidine phosphoribosyltransferase family.</text>
</comment>